<feature type="chain" id="PRO_0000312596" description="L-arabinose isomerase">
    <location>
        <begin position="1"/>
        <end position="501"/>
    </location>
</feature>
<feature type="binding site" evidence="1">
    <location>
        <position position="307"/>
    </location>
    <ligand>
        <name>Mn(2+)</name>
        <dbReference type="ChEBI" id="CHEBI:29035"/>
    </ligand>
</feature>
<feature type="binding site" evidence="1">
    <location>
        <position position="334"/>
    </location>
    <ligand>
        <name>Mn(2+)</name>
        <dbReference type="ChEBI" id="CHEBI:29035"/>
    </ligand>
</feature>
<feature type="binding site" evidence="1">
    <location>
        <position position="351"/>
    </location>
    <ligand>
        <name>Mn(2+)</name>
        <dbReference type="ChEBI" id="CHEBI:29035"/>
    </ligand>
</feature>
<feature type="binding site" evidence="1">
    <location>
        <position position="450"/>
    </location>
    <ligand>
        <name>Mn(2+)</name>
        <dbReference type="ChEBI" id="CHEBI:29035"/>
    </ligand>
</feature>
<gene>
    <name evidence="1" type="primary">araA</name>
    <name type="ordered locus">Acel_0873</name>
</gene>
<reference key="1">
    <citation type="submission" date="2009-11" db="EMBL/GenBank/DDBJ databases">
        <title>An L-arabinose isomerase from Acidothermus cellulolytics ATCC 43068: cloning, expression, purification and characterization.</title>
        <authorList>
            <person name="Cheng L."/>
            <person name="Mu W."/>
            <person name="Jiang B."/>
        </authorList>
    </citation>
    <scope>NUCLEOTIDE SEQUENCE [GENOMIC DNA]</scope>
    <source>
        <strain>ATCC 43068 / DSM 8971 / 11B</strain>
    </source>
</reference>
<reference key="2">
    <citation type="journal article" date="2009" name="Genome Res.">
        <title>Complete genome of the cellulolytic thermophile Acidothermus cellulolyticus 11B provides insights into its ecophysiological and evolutionary adaptations.</title>
        <authorList>
            <person name="Barabote R.D."/>
            <person name="Xie G."/>
            <person name="Leu D.H."/>
            <person name="Normand P."/>
            <person name="Necsulea A."/>
            <person name="Daubin V."/>
            <person name="Medigue C."/>
            <person name="Adney W.S."/>
            <person name="Xu X.C."/>
            <person name="Lapidus A."/>
            <person name="Parales R.E."/>
            <person name="Detter C."/>
            <person name="Pujic P."/>
            <person name="Bruce D."/>
            <person name="Lavire C."/>
            <person name="Challacombe J.F."/>
            <person name="Brettin T.S."/>
            <person name="Berry A.M."/>
        </authorList>
    </citation>
    <scope>NUCLEOTIDE SEQUENCE [LARGE SCALE GENOMIC DNA]</scope>
    <source>
        <strain>ATCC 43068 / DSM 8971 / 11B</strain>
    </source>
</reference>
<evidence type="ECO:0000255" key="1">
    <source>
        <dbReference type="HAMAP-Rule" id="MF_00519"/>
    </source>
</evidence>
<proteinExistence type="inferred from homology"/>
<organism>
    <name type="scientific">Acidothermus cellulolyticus (strain ATCC 43068 / DSM 8971 / 11B)</name>
    <dbReference type="NCBI Taxonomy" id="351607"/>
    <lineage>
        <taxon>Bacteria</taxon>
        <taxon>Bacillati</taxon>
        <taxon>Actinomycetota</taxon>
        <taxon>Actinomycetes</taxon>
        <taxon>Acidothermales</taxon>
        <taxon>Acidothermaceae</taxon>
        <taxon>Acidothermus</taxon>
    </lineage>
</organism>
<dbReference type="EC" id="5.3.1.4" evidence="1"/>
<dbReference type="EMBL" id="GU188440">
    <property type="protein sequence ID" value="ACZ67491.1"/>
    <property type="molecule type" value="Genomic_DNA"/>
</dbReference>
<dbReference type="EMBL" id="CP000481">
    <property type="protein sequence ID" value="ABK52646.1"/>
    <property type="molecule type" value="Genomic_DNA"/>
</dbReference>
<dbReference type="RefSeq" id="WP_011719709.1">
    <property type="nucleotide sequence ID" value="NC_008578.1"/>
</dbReference>
<dbReference type="SMR" id="A0LT86"/>
<dbReference type="STRING" id="351607.Acel_0873"/>
<dbReference type="KEGG" id="ace:Acel_0873"/>
<dbReference type="eggNOG" id="COG2160">
    <property type="taxonomic scope" value="Bacteria"/>
</dbReference>
<dbReference type="HOGENOM" id="CLU_045663_0_0_11"/>
<dbReference type="InParanoid" id="A0LT86"/>
<dbReference type="OrthoDB" id="9765600at2"/>
<dbReference type="BRENDA" id="5.3.1.4">
    <property type="organism ID" value="9545"/>
</dbReference>
<dbReference type="UniPathway" id="UPA00145">
    <property type="reaction ID" value="UER00565"/>
</dbReference>
<dbReference type="Proteomes" id="UP000008221">
    <property type="component" value="Chromosome"/>
</dbReference>
<dbReference type="GO" id="GO:0005829">
    <property type="term" value="C:cytosol"/>
    <property type="evidence" value="ECO:0007669"/>
    <property type="project" value="TreeGrafter"/>
</dbReference>
<dbReference type="GO" id="GO:0008733">
    <property type="term" value="F:L-arabinose isomerase activity"/>
    <property type="evidence" value="ECO:0007669"/>
    <property type="project" value="UniProtKB-UniRule"/>
</dbReference>
<dbReference type="GO" id="GO:0030145">
    <property type="term" value="F:manganese ion binding"/>
    <property type="evidence" value="ECO:0007669"/>
    <property type="project" value="UniProtKB-UniRule"/>
</dbReference>
<dbReference type="GO" id="GO:0019569">
    <property type="term" value="P:L-arabinose catabolic process to xylulose 5-phosphate"/>
    <property type="evidence" value="ECO:0007669"/>
    <property type="project" value="UniProtKB-UniRule"/>
</dbReference>
<dbReference type="CDD" id="cd03557">
    <property type="entry name" value="L-arabinose_isomerase"/>
    <property type="match status" value="1"/>
</dbReference>
<dbReference type="Gene3D" id="3.40.50.10940">
    <property type="match status" value="1"/>
</dbReference>
<dbReference type="HAMAP" id="MF_00519">
    <property type="entry name" value="Arabinose_Isome"/>
    <property type="match status" value="1"/>
</dbReference>
<dbReference type="InterPro" id="IPR024664">
    <property type="entry name" value="Ara_Isoase_C"/>
</dbReference>
<dbReference type="InterPro" id="IPR055390">
    <property type="entry name" value="AraA_central"/>
</dbReference>
<dbReference type="InterPro" id="IPR055389">
    <property type="entry name" value="AraA_N"/>
</dbReference>
<dbReference type="InterPro" id="IPR038583">
    <property type="entry name" value="AraA_N_sf"/>
</dbReference>
<dbReference type="InterPro" id="IPR004216">
    <property type="entry name" value="Fuc/Ara_isomerase_C"/>
</dbReference>
<dbReference type="InterPro" id="IPR009015">
    <property type="entry name" value="Fucose_isomerase_N/cen_sf"/>
</dbReference>
<dbReference type="InterPro" id="IPR003762">
    <property type="entry name" value="Lara_isomerase"/>
</dbReference>
<dbReference type="NCBIfam" id="NF002795">
    <property type="entry name" value="PRK02929.1"/>
    <property type="match status" value="1"/>
</dbReference>
<dbReference type="PANTHER" id="PTHR38464">
    <property type="entry name" value="L-ARABINOSE ISOMERASE"/>
    <property type="match status" value="1"/>
</dbReference>
<dbReference type="PANTHER" id="PTHR38464:SF1">
    <property type="entry name" value="L-ARABINOSE ISOMERASE"/>
    <property type="match status" value="1"/>
</dbReference>
<dbReference type="Pfam" id="PF24856">
    <property type="entry name" value="AraA_central"/>
    <property type="match status" value="1"/>
</dbReference>
<dbReference type="Pfam" id="PF02610">
    <property type="entry name" value="AraA_N"/>
    <property type="match status" value="1"/>
</dbReference>
<dbReference type="Pfam" id="PF11762">
    <property type="entry name" value="Arabinose_Iso_C"/>
    <property type="match status" value="1"/>
</dbReference>
<dbReference type="PIRSF" id="PIRSF001478">
    <property type="entry name" value="L-ara_isomerase"/>
    <property type="match status" value="1"/>
</dbReference>
<dbReference type="SUPFAM" id="SSF50443">
    <property type="entry name" value="FucI/AraA C-terminal domain-like"/>
    <property type="match status" value="1"/>
</dbReference>
<dbReference type="SUPFAM" id="SSF53743">
    <property type="entry name" value="FucI/AraA N-terminal and middle domains"/>
    <property type="match status" value="1"/>
</dbReference>
<protein>
    <recommendedName>
        <fullName evidence="1">L-arabinose isomerase</fullName>
        <ecNumber evidence="1">5.3.1.4</ecNumber>
    </recommendedName>
</protein>
<name>ARAA_ACIC1</name>
<keyword id="KW-0054">Arabinose catabolism</keyword>
<keyword id="KW-0119">Carbohydrate metabolism</keyword>
<keyword id="KW-0413">Isomerase</keyword>
<keyword id="KW-0464">Manganese</keyword>
<keyword id="KW-0479">Metal-binding</keyword>
<keyword id="KW-1185">Reference proteome</keyword>
<comment type="function">
    <text evidence="1">Catalyzes the conversion of L-arabinose to L-ribulose.</text>
</comment>
<comment type="catalytic activity">
    <reaction evidence="1">
        <text>beta-L-arabinopyranose = L-ribulose</text>
        <dbReference type="Rhea" id="RHEA:14821"/>
        <dbReference type="ChEBI" id="CHEBI:16880"/>
        <dbReference type="ChEBI" id="CHEBI:40886"/>
        <dbReference type="EC" id="5.3.1.4"/>
    </reaction>
</comment>
<comment type="cofactor">
    <cofactor evidence="1">
        <name>Mn(2+)</name>
        <dbReference type="ChEBI" id="CHEBI:29035"/>
    </cofactor>
    <text evidence="1">Binds 1 Mn(2+) ion per subunit.</text>
</comment>
<comment type="pathway">
    <text evidence="1">Carbohydrate degradation; L-arabinose degradation via L-ribulose; D-xylulose 5-phosphate from L-arabinose (bacterial route): step 1/3.</text>
</comment>
<comment type="similarity">
    <text evidence="1">Belongs to the arabinose isomerase family.</text>
</comment>
<sequence>MTDLPYPEYECWFLTGSQHLYGEDVLSAVARQSQAIVEALNAAGLPVRLVWKPVLTDATGIRRMCSEASATDACIGVIAWMHTFSPAKAWINGLLALRKPLLHLHTQANLTLPWSTIDMDFMNLNQAAHGDREFGYVAARLAIPRKIVTGHFSDPDVVRDIAAWQRAAAGLADLRSTRLVRFGDTMRNVAVTDGDRVEAQIRLGSAIETYGVHDLGVRVDAVAESDVDALVDRYLADYDMAPELTIGGARHESLRYAAKLELALRSFLHDGRFTAFTTNFEDLGPLRQLPGIAVQRLMADGFGFGAEGDWKTALLVRAVKTMSRGLPGGTSFMEDYTYHLEPSGRLVLGAHMLEVCPTLTSATPRCEIHPLLMGGREDPVRLVFTADPAPAVIVGLCDMGDRLRLVANTADLVAPPEPLPRLPVARAVWQPHPELKTAATAWIAAGGPHHTALSTAVSAREIRDFARMAGLELVLIDEHTALDAALDRLWAIEQTRASRPW</sequence>
<accession>A0LT86</accession>
<accession>D2K8A4</accession>